<accession>P52526</accession>
<organismHost>
    <name type="scientific">Homo sapiens</name>
    <name type="common">Human</name>
    <dbReference type="NCBI Taxonomy" id="9606"/>
</organismHost>
<feature type="signal peptide" evidence="1">
    <location>
        <begin position="1"/>
        <end position="18"/>
    </location>
</feature>
<feature type="chain" id="PRO_0000038269" description="Envelope glycoprotein L" evidence="1">
    <location>
        <begin position="19"/>
        <end position="250"/>
    </location>
</feature>
<feature type="domain" description="gL betaherpesvirus-type" evidence="2">
    <location>
        <begin position="31"/>
        <end position="239"/>
    </location>
</feature>
<feature type="disulfide bond" description="Interchain" evidence="2">
    <location>
        <position position="35"/>
    </location>
</feature>
<feature type="disulfide bond" description="Interchain" evidence="2">
    <location>
        <position position="42"/>
    </location>
</feature>
<feature type="disulfide bond" description="Interchain" evidence="2">
    <location>
        <position position="127"/>
    </location>
</feature>
<feature type="disulfide bond" evidence="2">
    <location>
        <begin position="136"/>
        <end position="141"/>
    </location>
</feature>
<reference key="1">
    <citation type="journal article" date="1996" name="Arch. Virol.">
        <title>Restriction endonuclease mapping and molecular cloning of the human herpesvirus 6 variant B strain Z29 genome.</title>
        <authorList>
            <person name="Lindquester G.J."/>
            <person name="Inoue N."/>
            <person name="Allen R.D."/>
            <person name="Castelli J.W."/>
            <person name="Stamey F.R."/>
            <person name="Dambaugh T.R."/>
            <person name="O'Brian J.J."/>
            <person name="Danovich R.M."/>
            <person name="Frenkel N."/>
            <person name="Pellett P.E."/>
        </authorList>
    </citation>
    <scope>NUCLEOTIDE SEQUENCE [GENOMIC DNA]</scope>
</reference>
<reference key="2">
    <citation type="journal article" date="1999" name="J. Virol.">
        <title>Human herpesvirus 6B genome sequence: coding content and comparison with human herpesvirus 6A.</title>
        <authorList>
            <person name="Dominguez G."/>
            <person name="Dambaugh T.R."/>
            <person name="Stamey F.R."/>
            <person name="Dewhurst S."/>
            <person name="Inoue N."/>
            <person name="Pellett P.E."/>
        </authorList>
    </citation>
    <scope>NUCLEOTIDE SEQUENCE [LARGE SCALE GENOMIC DNA]</scope>
</reference>
<reference key="3">
    <citation type="journal article" date="2004" name="J. Virol.">
        <title>Discovery of a second form of tripartite complex containing gH-gL of human herpesvirus 6 and observations on CD46.</title>
        <authorList>
            <person name="Mori Y."/>
            <person name="Akkapaiboon P."/>
            <person name="Yonemoto S."/>
            <person name="Koike M."/>
            <person name="Takemoto M."/>
            <person name="Sadaoka T."/>
            <person name="Sasamoto Y."/>
            <person name="Konishi S."/>
            <person name="Uchiyama Y."/>
            <person name="Yamanishi K."/>
        </authorList>
    </citation>
    <scope>IDENTIFICATION IN COMPLEX WITH GLYCOPROTEIN O AND GLYCOPROTEIN H</scope>
    <source>
        <strain>HST</strain>
    </source>
</reference>
<sequence length="250" mass="28904">MELLLFVMSLILLTFSKAMPLFDHNSFYFEKLDDCIAAVINCTRSEVPLLLEPIYQPPVYNEDVMSILLKPPTKKKPFSRIMVTNEFLSDFLLLQDNPEQLRTLFALIGDPESRDNWLNFFNGFQTCSPSVGITTCISDNCRKYLPERITYVNNFFVDNIAGLEFNISENTDSFYSNIGFLLYLENPATGITKIIRFPFNSLTLFDTILNCLKYFHLKTGVEFDLLKQMEAYNSKLPFRSSRPTILIRNT</sequence>
<gene>
    <name evidence="1" type="primary">gL</name>
    <name type="synonym">CB10L</name>
    <name type="synonym">U82</name>
</gene>
<protein>
    <recommendedName>
        <fullName evidence="1">Envelope glycoprotein L</fullName>
        <shortName evidence="1">gL</shortName>
    </recommendedName>
</protein>
<organism>
    <name type="scientific">Human herpesvirus 6B (strain Z29)</name>
    <name type="common">HHV-6 variant B</name>
    <name type="synonym">Human B lymphotropic virus</name>
    <dbReference type="NCBI Taxonomy" id="36351"/>
    <lineage>
        <taxon>Viruses</taxon>
        <taxon>Duplodnaviria</taxon>
        <taxon>Heunggongvirae</taxon>
        <taxon>Peploviricota</taxon>
        <taxon>Herviviricetes</taxon>
        <taxon>Herpesvirales</taxon>
        <taxon>Orthoherpesviridae</taxon>
        <taxon>Betaherpesvirinae</taxon>
        <taxon>Roseolovirus</taxon>
        <taxon>Roseolovirus humanbeta6b</taxon>
        <taxon>Human herpesvirus 6B</taxon>
    </lineage>
</organism>
<name>GL_HHV6Z</name>
<comment type="function">
    <text evidence="1">The heterodimer glycoprotein H-glycoprotein L is required for the fusion of viral and plasma membranes leading to virus entry into the host cell. Acts as a functional inhibitor of gH and maintains gH in an inhibited form. Upon binding to host integrins, gL dissociates from gH leading to activation of the viral fusion glycoproteins gB and gH.</text>
</comment>
<comment type="subunit">
    <text evidence="1 3">Interacts with glycoprotein H (gH); this interaction is necessary for the correct processing and cell surface expression of gH (By similarity). Part of a gH-gL-gO complex (PubMed:15078943).</text>
</comment>
<comment type="subcellular location">
    <subcellularLocation>
        <location evidence="1">Virion membrane</location>
        <topology evidence="1">Peripheral membrane protein</topology>
        <orientation evidence="1">Extracellular side</orientation>
    </subcellularLocation>
    <subcellularLocation>
        <location evidence="1">Host cell membrane</location>
        <topology evidence="1">Peripheral membrane protein</topology>
        <orientation evidence="1">Extracellular side</orientation>
    </subcellularLocation>
    <subcellularLocation>
        <location evidence="1">Host Golgi apparatus</location>
        <location evidence="1">Host trans-Golgi network</location>
    </subcellularLocation>
    <text evidence="1">gL associates with the extravirion surface through its binding to gH. During virion morphogenesis, this protein probably accumulates in the host trans-Golgi where secondary envelopment occurs.</text>
</comment>
<comment type="similarity">
    <text evidence="2">Belongs to the herpesviridae glycoprotein L (gL) family. Betaherpesvirinae gL subfamily.</text>
</comment>
<proteinExistence type="inferred from homology"/>
<keyword id="KW-1015">Disulfide bond</keyword>
<keyword id="KW-1169">Fusion of virus membrane with host cell membrane</keyword>
<keyword id="KW-1168">Fusion of virus membrane with host membrane</keyword>
<keyword id="KW-0325">Glycoprotein</keyword>
<keyword id="KW-1032">Host cell membrane</keyword>
<keyword id="KW-1040">Host Golgi apparatus</keyword>
<keyword id="KW-1043">Host membrane</keyword>
<keyword id="KW-0472">Membrane</keyword>
<keyword id="KW-1185">Reference proteome</keyword>
<keyword id="KW-0732">Signal</keyword>
<keyword id="KW-0261">Viral envelope protein</keyword>
<keyword id="KW-1162">Viral penetration into host cytoplasm</keyword>
<keyword id="KW-0946">Virion</keyword>
<keyword id="KW-1160">Virus entry into host cell</keyword>
<dbReference type="EMBL" id="AF157706">
    <property type="protein sequence ID" value="AAB06366.1"/>
    <property type="molecule type" value="Genomic_DNA"/>
</dbReference>
<dbReference type="PIR" id="T44227">
    <property type="entry name" value="T44227"/>
</dbReference>
<dbReference type="RefSeq" id="NP_050261.1">
    <property type="nucleotide sequence ID" value="NC_000898.1"/>
</dbReference>
<dbReference type="SMR" id="P52526"/>
<dbReference type="DNASU" id="1497082"/>
<dbReference type="GeneID" id="1497082"/>
<dbReference type="KEGG" id="vg:1497082"/>
<dbReference type="Proteomes" id="UP000006930">
    <property type="component" value="Segment"/>
</dbReference>
<dbReference type="GO" id="GO:0044177">
    <property type="term" value="C:host cell Golgi apparatus"/>
    <property type="evidence" value="ECO:0007669"/>
    <property type="project" value="UniProtKB-SubCell"/>
</dbReference>
<dbReference type="GO" id="GO:0020002">
    <property type="term" value="C:host cell plasma membrane"/>
    <property type="evidence" value="ECO:0007669"/>
    <property type="project" value="UniProtKB-SubCell"/>
</dbReference>
<dbReference type="GO" id="GO:0016020">
    <property type="term" value="C:membrane"/>
    <property type="evidence" value="ECO:0007669"/>
    <property type="project" value="UniProtKB-KW"/>
</dbReference>
<dbReference type="GO" id="GO:0019031">
    <property type="term" value="C:viral envelope"/>
    <property type="evidence" value="ECO:0007669"/>
    <property type="project" value="UniProtKB-UniRule"/>
</dbReference>
<dbReference type="GO" id="GO:0055036">
    <property type="term" value="C:virion membrane"/>
    <property type="evidence" value="ECO:0007669"/>
    <property type="project" value="UniProtKB-SubCell"/>
</dbReference>
<dbReference type="GO" id="GO:0019064">
    <property type="term" value="P:fusion of virus membrane with host plasma membrane"/>
    <property type="evidence" value="ECO:0007669"/>
    <property type="project" value="UniProtKB-UniRule"/>
</dbReference>
<dbReference type="GO" id="GO:0046718">
    <property type="term" value="P:symbiont entry into host cell"/>
    <property type="evidence" value="ECO:0007669"/>
    <property type="project" value="UniProtKB-KW"/>
</dbReference>
<dbReference type="HAMAP" id="MF_04036">
    <property type="entry name" value="HSV_GL_betahv"/>
    <property type="match status" value="1"/>
</dbReference>
<dbReference type="InterPro" id="IPR002689">
    <property type="entry name" value="Cytomegalo_gL"/>
</dbReference>
<dbReference type="Pfam" id="PF01801">
    <property type="entry name" value="Cytomega_gL"/>
    <property type="match status" value="1"/>
</dbReference>
<dbReference type="PROSITE" id="PS52025">
    <property type="entry name" value="GL_BHV"/>
    <property type="match status" value="1"/>
</dbReference>
<evidence type="ECO:0000255" key="1">
    <source>
        <dbReference type="HAMAP-Rule" id="MF_04036"/>
    </source>
</evidence>
<evidence type="ECO:0000255" key="2">
    <source>
        <dbReference type="PROSITE-ProRule" id="PRU01369"/>
    </source>
</evidence>
<evidence type="ECO:0000269" key="3">
    <source>
    </source>
</evidence>